<name>GUB2_HORVU</name>
<dbReference type="EC" id="3.2.1.73"/>
<dbReference type="EMBL" id="M13237">
    <property type="protein sequence ID" value="AAA32962.1"/>
    <property type="molecule type" value="mRNA"/>
</dbReference>
<dbReference type="PIR" id="A25455">
    <property type="entry name" value="A25455"/>
</dbReference>
<dbReference type="PDB" id="1AQ0">
    <property type="method" value="X-ray"/>
    <property type="resolution" value="2.00 A"/>
    <property type="chains" value="A/B=7-312"/>
</dbReference>
<dbReference type="PDB" id="1GHR">
    <property type="method" value="X-ray"/>
    <property type="resolution" value="2.20 A"/>
    <property type="chains" value="A=7-312"/>
</dbReference>
<dbReference type="PDBsum" id="1AQ0"/>
<dbReference type="PDBsum" id="1GHR"/>
<dbReference type="SMR" id="P12257"/>
<dbReference type="CAZy" id="GH17">
    <property type="family name" value="Glycoside Hydrolase Family 17"/>
</dbReference>
<dbReference type="BRENDA" id="3.2.1.73">
    <property type="organism ID" value="2687"/>
</dbReference>
<dbReference type="UniPathway" id="UPA00350"/>
<dbReference type="EvolutionaryTrace" id="P12257"/>
<dbReference type="ExpressionAtlas" id="P12257">
    <property type="expression patterns" value="baseline and differential"/>
</dbReference>
<dbReference type="GO" id="GO:0042972">
    <property type="term" value="F:licheninase activity"/>
    <property type="evidence" value="ECO:0007669"/>
    <property type="project" value="UniProtKB-EC"/>
</dbReference>
<dbReference type="GO" id="GO:0005975">
    <property type="term" value="P:carbohydrate metabolic process"/>
    <property type="evidence" value="ECO:0007669"/>
    <property type="project" value="InterPro"/>
</dbReference>
<dbReference type="FunFam" id="3.20.20.80:FF:000010">
    <property type="entry name" value="glucan endo-1,3-beta-glucosidase, basic"/>
    <property type="match status" value="1"/>
</dbReference>
<dbReference type="Gene3D" id="3.20.20.80">
    <property type="entry name" value="Glycosidases"/>
    <property type="match status" value="1"/>
</dbReference>
<dbReference type="InterPro" id="IPR000490">
    <property type="entry name" value="Glyco_hydro_17"/>
</dbReference>
<dbReference type="InterPro" id="IPR044965">
    <property type="entry name" value="Glyco_hydro_17_plant"/>
</dbReference>
<dbReference type="InterPro" id="IPR017853">
    <property type="entry name" value="Glycoside_hydrolase_SF"/>
</dbReference>
<dbReference type="PANTHER" id="PTHR32227">
    <property type="entry name" value="GLUCAN ENDO-1,3-BETA-GLUCOSIDASE BG1-RELATED-RELATED"/>
    <property type="match status" value="1"/>
</dbReference>
<dbReference type="Pfam" id="PF00332">
    <property type="entry name" value="Glyco_hydro_17"/>
    <property type="match status" value="1"/>
</dbReference>
<dbReference type="SUPFAM" id="SSF51445">
    <property type="entry name" value="(Trans)glycosidases"/>
    <property type="match status" value="1"/>
</dbReference>
<dbReference type="PROSITE" id="PS00587">
    <property type="entry name" value="GLYCOSYL_HYDROL_F17"/>
    <property type="match status" value="1"/>
</dbReference>
<feature type="signal peptide" evidence="2">
    <location>
        <begin position="1" status="less than"/>
        <end position="6"/>
    </location>
</feature>
<feature type="chain" id="PRO_0000011897" description="Lichenase-2">
    <location>
        <begin position="7"/>
        <end position="312"/>
    </location>
</feature>
<feature type="active site" description="Proton donor" evidence="1">
    <location>
        <position position="99"/>
    </location>
</feature>
<feature type="active site" description="Nucleophile" evidence="1">
    <location>
        <position position="238"/>
    </location>
</feature>
<feature type="glycosylation site" description="N-linked (GlcNAc...) asparagine">
    <location>
        <position position="196"/>
    </location>
</feature>
<feature type="non-terminal residue">
    <location>
        <position position="1"/>
    </location>
</feature>
<feature type="strand" evidence="4">
    <location>
        <begin position="8"/>
        <end position="10"/>
    </location>
</feature>
<feature type="helix" evidence="4">
    <location>
        <begin position="21"/>
        <end position="31"/>
    </location>
</feature>
<feature type="strand" evidence="4">
    <location>
        <begin position="35"/>
        <end position="40"/>
    </location>
</feature>
<feature type="helix" evidence="4">
    <location>
        <begin position="43"/>
        <end position="49"/>
    </location>
</feature>
<feature type="strand" evidence="4">
    <location>
        <begin position="55"/>
        <end position="60"/>
    </location>
</feature>
<feature type="helix" evidence="4">
    <location>
        <begin position="62"/>
        <end position="64"/>
    </location>
</feature>
<feature type="helix" evidence="4">
    <location>
        <begin position="65"/>
        <end position="70"/>
    </location>
</feature>
<feature type="helix" evidence="4">
    <location>
        <begin position="72"/>
        <end position="82"/>
    </location>
</feature>
<feature type="turn" evidence="4">
    <location>
        <begin position="83"/>
        <end position="85"/>
    </location>
</feature>
<feature type="strand" evidence="4">
    <location>
        <begin position="89"/>
        <end position="99"/>
    </location>
</feature>
<feature type="helix" evidence="4">
    <location>
        <begin position="102"/>
        <end position="107"/>
    </location>
</feature>
<feature type="helix" evidence="4">
    <location>
        <begin position="108"/>
        <end position="121"/>
    </location>
</feature>
<feature type="strand" evidence="4">
    <location>
        <begin position="127"/>
        <end position="134"/>
    </location>
</feature>
<feature type="helix" evidence="4">
    <location>
        <begin position="135"/>
        <end position="137"/>
    </location>
</feature>
<feature type="strand" evidence="4">
    <location>
        <begin position="138"/>
        <end position="140"/>
    </location>
</feature>
<feature type="helix" evidence="4">
    <location>
        <begin position="144"/>
        <end position="146"/>
    </location>
</feature>
<feature type="helix" evidence="4">
    <location>
        <begin position="151"/>
        <end position="167"/>
    </location>
</feature>
<feature type="strand" evidence="4">
    <location>
        <begin position="171"/>
        <end position="174"/>
    </location>
</feature>
<feature type="helix" evidence="4">
    <location>
        <begin position="177"/>
        <end position="183"/>
    </location>
</feature>
<feature type="turn" evidence="5">
    <location>
        <begin position="185"/>
        <end position="187"/>
    </location>
</feature>
<feature type="helix" evidence="4">
    <location>
        <begin position="190"/>
        <end position="194"/>
    </location>
</feature>
<feature type="strand" evidence="4">
    <location>
        <begin position="201"/>
        <end position="204"/>
    </location>
</feature>
<feature type="strand" evidence="4">
    <location>
        <begin position="207"/>
        <end position="209"/>
    </location>
</feature>
<feature type="helix" evidence="4">
    <location>
        <begin position="212"/>
        <end position="225"/>
    </location>
</feature>
<feature type="turn" evidence="4">
    <location>
        <begin position="226"/>
        <end position="228"/>
    </location>
</feature>
<feature type="strand" evidence="4">
    <location>
        <begin position="234"/>
        <end position="238"/>
    </location>
</feature>
<feature type="strand" evidence="4">
    <location>
        <begin position="243"/>
        <end position="246"/>
    </location>
</feature>
<feature type="helix" evidence="4">
    <location>
        <begin position="251"/>
        <end position="264"/>
    </location>
</feature>
<feature type="turn" evidence="4">
    <location>
        <begin position="265"/>
        <end position="267"/>
    </location>
</feature>
<feature type="strand" evidence="4">
    <location>
        <begin position="270"/>
        <end position="274"/>
    </location>
</feature>
<feature type="strand" evidence="4">
    <location>
        <begin position="278"/>
        <end position="281"/>
    </location>
</feature>
<feature type="helix" evidence="4">
    <location>
        <begin position="293"/>
        <end position="295"/>
    </location>
</feature>
<feature type="strand" evidence="4">
    <location>
        <begin position="306"/>
        <end position="308"/>
    </location>
</feature>
<evidence type="ECO:0000250" key="1">
    <source>
        <dbReference type="UniProtKB" id="O22317"/>
    </source>
</evidence>
<evidence type="ECO:0000269" key="2">
    <source ref="2"/>
</evidence>
<evidence type="ECO:0000305" key="3"/>
<evidence type="ECO:0007829" key="4">
    <source>
        <dbReference type="PDB" id="1AQ0"/>
    </source>
</evidence>
<evidence type="ECO:0007829" key="5">
    <source>
        <dbReference type="PDB" id="1GHR"/>
    </source>
</evidence>
<comment type="function">
    <text>Functions in plant cell wall hydrolysis during mobilization of the endosperm in germinating grain or during the growth of vegetative tissues.</text>
</comment>
<comment type="catalytic activity">
    <reaction>
        <text>Hydrolysis of (1-&gt;4)-beta-D-glucosidic linkages in beta-D-glucans containing (1-&gt;3)- and (1-&gt;4)-bonds.</text>
        <dbReference type="EC" id="3.2.1.73"/>
    </reaction>
</comment>
<comment type="pathway">
    <text>Glycan metabolism; beta-D-glucan degradation.</text>
</comment>
<comment type="similarity">
    <text evidence="3">Belongs to the glycosyl hydrolase 17 family.</text>
</comment>
<proteinExistence type="evidence at protein level"/>
<accession>P12257</accession>
<organism>
    <name type="scientific">Hordeum vulgare</name>
    <name type="common">Barley</name>
    <dbReference type="NCBI Taxonomy" id="4513"/>
    <lineage>
        <taxon>Eukaryota</taxon>
        <taxon>Viridiplantae</taxon>
        <taxon>Streptophyta</taxon>
        <taxon>Embryophyta</taxon>
        <taxon>Tracheophyta</taxon>
        <taxon>Spermatophyta</taxon>
        <taxon>Magnoliopsida</taxon>
        <taxon>Liliopsida</taxon>
        <taxon>Poales</taxon>
        <taxon>Poaceae</taxon>
        <taxon>BOP clade</taxon>
        <taxon>Pooideae</taxon>
        <taxon>Triticodae</taxon>
        <taxon>Triticeae</taxon>
        <taxon>Hordeinae</taxon>
        <taxon>Hordeum</taxon>
    </lineage>
</organism>
<keyword id="KW-0002">3D-structure</keyword>
<keyword id="KW-0903">Direct protein sequencing</keyword>
<keyword id="KW-0325">Glycoprotein</keyword>
<keyword id="KW-0326">Glycosidase</keyword>
<keyword id="KW-0378">Hydrolase</keyword>
<keyword id="KW-0732">Signal</keyword>
<sequence>PPSVESIGVCYGMSANNLPAASTVVSMFKFNGIKSMRLYAPNQAALQAVGGTGINVVVGAPNDVLSNLAASPAAAASWVKSNIQAYPKVSFRYVCVGNEVAGGATRNLVPAMKNVHGALVAAGLGHIKVTTSVSQAILGVFSPPSAGSFTGEAAAFMGPVVQFLARTNAPLMANIYPYLAWAYNPSAMDMGYALFNASGTVVRDGAYGYQNLFDTTVDAFYTAMGKHGGSSVKLVVSESGWPSGGGTAATPANARFYNQHLINHVGRGTPRHPGAIETYIFAMFNENQKDSGVEQNWGLFYPNMQHVYPINF</sequence>
<protein>
    <recommendedName>
        <fullName>Lichenase-2</fullName>
        <ecNumber>3.2.1.73</ecNumber>
    </recommendedName>
    <alternativeName>
        <fullName>(1-&gt;3,1-&gt;4)-beta-glucanase isoenzyme EII</fullName>
    </alternativeName>
    <alternativeName>
        <fullName>Endo-beta-1,3-1,4 glucanase II</fullName>
    </alternativeName>
    <alternativeName>
        <fullName>Lichenase II</fullName>
    </alternativeName>
</protein>
<reference key="1">
    <citation type="journal article" date="1986" name="Proc. Natl. Acad. Sci. U.S.A.">
        <title>Primary structure of the (1-3,1-4)-beta-D-glucan 4-glucohydrolase from barley aleurone.</title>
        <authorList>
            <person name="Fincher G.B."/>
            <person name="Lock P.A."/>
            <person name="Morgan M.M."/>
            <person name="Lingelbach K."/>
            <person name="Wettenhall R.E.H."/>
            <person name="Mercer J.F.B."/>
            <person name="Brandt A."/>
            <person name="Thomsen K.K."/>
        </authorList>
    </citation>
    <scope>NUCLEOTIDE SEQUENCE [MRNA] OF 1-291</scope>
    <scope>PROTEIN SEQUENCE OF 292-312</scope>
    <source>
        <strain>cv. Himalaya</strain>
    </source>
</reference>
<reference key="2">
    <citation type="journal article" date="1982" name="FEBS Lett.">
        <title>Amino acid sequence homology in two 1,3;1,4-beta-glucan endohydrolases from germinating barley (Hordeum vulgare).</title>
        <authorList>
            <person name="Woodward J.R."/>
            <person name="Morgan F.J."/>
            <person name="Fincher G.B."/>
        </authorList>
    </citation>
    <scope>PROTEIN SEQUENCE OF 7-46</scope>
    <source>
        <strain>cv. Clipper</strain>
        <tissue>Seed</tissue>
    </source>
</reference>
<reference key="3">
    <citation type="journal article" date="1994" name="Proc. Natl. Acad. Sci. U.S.A.">
        <title>Three-dimensional structures of two plant beta-glucan endohydrolases with distinct substrate specificities.</title>
        <authorList>
            <person name="Varghese J.N."/>
            <person name="Garrett T.P.J."/>
            <person name="Colman P.M."/>
            <person name="Chen L."/>
            <person name="Hoej P.B."/>
            <person name="Fincher G.B."/>
        </authorList>
    </citation>
    <scope>X-RAY CRYSTALLOGRAPHY (2.2 ANGSTROMS)</scope>
</reference>
<reference key="4">
    <citation type="journal article" date="1998" name="J. Biol. Chem.">
        <title>Crystal structure of barley 1,3-1,4-beta-glucanase at 2.0-A resolution and comparison with Bacillus 1,3-1,4-beta-glucanase.</title>
        <authorList>
            <person name="Mueller J.J."/>
            <person name="Thomsen K.K."/>
            <person name="Heinemann U."/>
        </authorList>
    </citation>
    <scope>X-RAY CRYSTALLOGRAPHY (2.0 ANGSTROMS)</scope>
</reference>